<protein>
    <recommendedName>
        <fullName evidence="1">tRNA/tmRNA (uracil-C(5))-methyltransferase</fullName>
        <ecNumber evidence="1">2.1.1.-</ecNumber>
        <ecNumber evidence="1">2.1.1.35</ecNumber>
    </recommendedName>
    <alternativeName>
        <fullName evidence="1">tRNA (uracil(54)-C(5))-methyltransferase</fullName>
    </alternativeName>
    <alternativeName>
        <fullName evidence="1">tRNA(m5U54)-methyltransferase</fullName>
        <shortName evidence="1">RUMT</shortName>
    </alternativeName>
    <alternativeName>
        <fullName evidence="1">tmRNA (uracil(341)-C(5))-methyltransferase</fullName>
    </alternativeName>
</protein>
<name>TRMA_PECAS</name>
<gene>
    <name evidence="1" type="primary">trmA</name>
    <name type="ordered locus">ECA4239</name>
</gene>
<organism>
    <name type="scientific">Pectobacterium atrosepticum (strain SCRI 1043 / ATCC BAA-672)</name>
    <name type="common">Erwinia carotovora subsp. atroseptica</name>
    <dbReference type="NCBI Taxonomy" id="218491"/>
    <lineage>
        <taxon>Bacteria</taxon>
        <taxon>Pseudomonadati</taxon>
        <taxon>Pseudomonadota</taxon>
        <taxon>Gammaproteobacteria</taxon>
        <taxon>Enterobacterales</taxon>
        <taxon>Pectobacteriaceae</taxon>
        <taxon>Pectobacterium</taxon>
    </lineage>
</organism>
<proteinExistence type="inferred from homology"/>
<feature type="chain" id="PRO_0000161862" description="tRNA/tmRNA (uracil-C(5))-methyltransferase">
    <location>
        <begin position="1"/>
        <end position="367"/>
    </location>
</feature>
<feature type="active site" description="Nucleophile" evidence="1">
    <location>
        <position position="324"/>
    </location>
</feature>
<feature type="active site" description="Proton acceptor" evidence="1">
    <location>
        <position position="358"/>
    </location>
</feature>
<feature type="binding site" evidence="1">
    <location>
        <position position="190"/>
    </location>
    <ligand>
        <name>S-adenosyl-L-methionine</name>
        <dbReference type="ChEBI" id="CHEBI:59789"/>
    </ligand>
</feature>
<feature type="binding site" evidence="1">
    <location>
        <position position="218"/>
    </location>
    <ligand>
        <name>S-adenosyl-L-methionine</name>
        <dbReference type="ChEBI" id="CHEBI:59789"/>
    </ligand>
</feature>
<feature type="binding site" evidence="1">
    <location>
        <position position="223"/>
    </location>
    <ligand>
        <name>S-adenosyl-L-methionine</name>
        <dbReference type="ChEBI" id="CHEBI:59789"/>
    </ligand>
</feature>
<feature type="binding site" evidence="1">
    <location>
        <position position="239"/>
    </location>
    <ligand>
        <name>S-adenosyl-L-methionine</name>
        <dbReference type="ChEBI" id="CHEBI:59789"/>
    </ligand>
</feature>
<feature type="binding site" evidence="1">
    <location>
        <position position="299"/>
    </location>
    <ligand>
        <name>S-adenosyl-L-methionine</name>
        <dbReference type="ChEBI" id="CHEBI:59789"/>
    </ligand>
</feature>
<reference key="1">
    <citation type="journal article" date="2004" name="Proc. Natl. Acad. Sci. U.S.A.">
        <title>Genome sequence of the enterobacterial phytopathogen Erwinia carotovora subsp. atroseptica and characterization of virulence factors.</title>
        <authorList>
            <person name="Bell K.S."/>
            <person name="Sebaihia M."/>
            <person name="Pritchard L."/>
            <person name="Holden M.T.G."/>
            <person name="Hyman L.J."/>
            <person name="Holeva M.C."/>
            <person name="Thomson N.R."/>
            <person name="Bentley S.D."/>
            <person name="Churcher L.J.C."/>
            <person name="Mungall K."/>
            <person name="Atkin R."/>
            <person name="Bason N."/>
            <person name="Brooks K."/>
            <person name="Chillingworth T."/>
            <person name="Clark K."/>
            <person name="Doggett J."/>
            <person name="Fraser A."/>
            <person name="Hance Z."/>
            <person name="Hauser H."/>
            <person name="Jagels K."/>
            <person name="Moule S."/>
            <person name="Norbertczak H."/>
            <person name="Ormond D."/>
            <person name="Price C."/>
            <person name="Quail M.A."/>
            <person name="Sanders M."/>
            <person name="Walker D."/>
            <person name="Whitehead S."/>
            <person name="Salmond G.P.C."/>
            <person name="Birch P.R.J."/>
            <person name="Parkhill J."/>
            <person name="Toth I.K."/>
        </authorList>
    </citation>
    <scope>NUCLEOTIDE SEQUENCE [LARGE SCALE GENOMIC DNA]</scope>
    <source>
        <strain>SCRI 1043 / ATCC BAA-672</strain>
    </source>
</reference>
<comment type="function">
    <text evidence="1">Dual-specificity methyltransferase that catalyzes the formation of 5-methyluridine at position 54 (m5U54) in all tRNAs, and that of position 341 (m5U341) in tmRNA (transfer-mRNA).</text>
</comment>
<comment type="catalytic activity">
    <reaction evidence="1">
        <text>uridine(54) in tRNA + S-adenosyl-L-methionine = 5-methyluridine(54) in tRNA + S-adenosyl-L-homocysteine + H(+)</text>
        <dbReference type="Rhea" id="RHEA:42712"/>
        <dbReference type="Rhea" id="RHEA-COMP:10167"/>
        <dbReference type="Rhea" id="RHEA-COMP:10193"/>
        <dbReference type="ChEBI" id="CHEBI:15378"/>
        <dbReference type="ChEBI" id="CHEBI:57856"/>
        <dbReference type="ChEBI" id="CHEBI:59789"/>
        <dbReference type="ChEBI" id="CHEBI:65315"/>
        <dbReference type="ChEBI" id="CHEBI:74447"/>
        <dbReference type="EC" id="2.1.1.35"/>
    </reaction>
</comment>
<comment type="catalytic activity">
    <reaction evidence="1">
        <text>uridine(341) in tmRNA + S-adenosyl-L-methionine = 5-methyluridine(341) in tmRNA + S-adenosyl-L-homocysteine + H(+)</text>
        <dbReference type="Rhea" id="RHEA:43612"/>
        <dbReference type="Rhea" id="RHEA-COMP:10630"/>
        <dbReference type="Rhea" id="RHEA-COMP:10631"/>
        <dbReference type="ChEBI" id="CHEBI:15378"/>
        <dbReference type="ChEBI" id="CHEBI:57856"/>
        <dbReference type="ChEBI" id="CHEBI:59789"/>
        <dbReference type="ChEBI" id="CHEBI:65315"/>
        <dbReference type="ChEBI" id="CHEBI:74447"/>
    </reaction>
</comment>
<comment type="similarity">
    <text evidence="1">Belongs to the class I-like SAM-binding methyltransferase superfamily. RNA M5U methyltransferase family. TrmA subfamily.</text>
</comment>
<evidence type="ECO:0000255" key="1">
    <source>
        <dbReference type="HAMAP-Rule" id="MF_01011"/>
    </source>
</evidence>
<accession>Q6CZB4</accession>
<dbReference type="EC" id="2.1.1.-" evidence="1"/>
<dbReference type="EC" id="2.1.1.35" evidence="1"/>
<dbReference type="EMBL" id="BX950851">
    <property type="protein sequence ID" value="CAG77136.1"/>
    <property type="molecule type" value="Genomic_DNA"/>
</dbReference>
<dbReference type="RefSeq" id="WP_011095710.1">
    <property type="nucleotide sequence ID" value="NC_004547.2"/>
</dbReference>
<dbReference type="SMR" id="Q6CZB4"/>
<dbReference type="STRING" id="218491.ECA4239"/>
<dbReference type="GeneID" id="57210911"/>
<dbReference type="KEGG" id="eca:ECA4239"/>
<dbReference type="PATRIC" id="fig|218491.5.peg.4316"/>
<dbReference type="eggNOG" id="COG2265">
    <property type="taxonomic scope" value="Bacteria"/>
</dbReference>
<dbReference type="HOGENOM" id="CLU_043022_0_0_6"/>
<dbReference type="OrthoDB" id="9804590at2"/>
<dbReference type="Proteomes" id="UP000007966">
    <property type="component" value="Chromosome"/>
</dbReference>
<dbReference type="GO" id="GO:0005829">
    <property type="term" value="C:cytosol"/>
    <property type="evidence" value="ECO:0007669"/>
    <property type="project" value="TreeGrafter"/>
</dbReference>
<dbReference type="GO" id="GO:0019843">
    <property type="term" value="F:rRNA binding"/>
    <property type="evidence" value="ECO:0007669"/>
    <property type="project" value="TreeGrafter"/>
</dbReference>
<dbReference type="GO" id="GO:0030697">
    <property type="term" value="F:tRNA (uracil(54)-C5)-methyltransferase activity, S-adenosyl methionine-dependent"/>
    <property type="evidence" value="ECO:0007669"/>
    <property type="project" value="UniProtKB-UniRule"/>
</dbReference>
<dbReference type="GO" id="GO:0000049">
    <property type="term" value="F:tRNA binding"/>
    <property type="evidence" value="ECO:0007669"/>
    <property type="project" value="TreeGrafter"/>
</dbReference>
<dbReference type="GO" id="GO:0030488">
    <property type="term" value="P:tRNA methylation"/>
    <property type="evidence" value="ECO:0007669"/>
    <property type="project" value="UniProtKB-UniRule"/>
</dbReference>
<dbReference type="CDD" id="cd02440">
    <property type="entry name" value="AdoMet_MTases"/>
    <property type="match status" value="1"/>
</dbReference>
<dbReference type="FunFam" id="2.40.50.1070:FF:000001">
    <property type="entry name" value="tRNA/tmRNA (uracil-C(5))-methyltransferase"/>
    <property type="match status" value="1"/>
</dbReference>
<dbReference type="FunFam" id="3.40.50.150:FF:000012">
    <property type="entry name" value="tRNA/tmRNA (uracil-C(5))-methyltransferase"/>
    <property type="match status" value="1"/>
</dbReference>
<dbReference type="Gene3D" id="2.40.50.1070">
    <property type="match status" value="1"/>
</dbReference>
<dbReference type="Gene3D" id="3.40.50.150">
    <property type="entry name" value="Vaccinia Virus protein VP39"/>
    <property type="match status" value="1"/>
</dbReference>
<dbReference type="HAMAP" id="MF_01011">
    <property type="entry name" value="RNA_methyltr_TrmA"/>
    <property type="match status" value="1"/>
</dbReference>
<dbReference type="InterPro" id="IPR030390">
    <property type="entry name" value="MeTrfase_TrmA_AS"/>
</dbReference>
<dbReference type="InterPro" id="IPR030391">
    <property type="entry name" value="MeTrfase_TrmA_CS"/>
</dbReference>
<dbReference type="InterPro" id="IPR029063">
    <property type="entry name" value="SAM-dependent_MTases_sf"/>
</dbReference>
<dbReference type="InterPro" id="IPR011869">
    <property type="entry name" value="TrmA_MeTrfase"/>
</dbReference>
<dbReference type="InterPro" id="IPR010280">
    <property type="entry name" value="U5_MeTrfase_fam"/>
</dbReference>
<dbReference type="NCBIfam" id="TIGR02143">
    <property type="entry name" value="trmA_only"/>
    <property type="match status" value="1"/>
</dbReference>
<dbReference type="PANTHER" id="PTHR47790">
    <property type="entry name" value="TRNA/TMRNA (URACIL-C(5))-METHYLTRANSFERASE"/>
    <property type="match status" value="1"/>
</dbReference>
<dbReference type="PANTHER" id="PTHR47790:SF2">
    <property type="entry name" value="TRNA_TMRNA (URACIL-C(5))-METHYLTRANSFERASE"/>
    <property type="match status" value="1"/>
</dbReference>
<dbReference type="Pfam" id="PF05958">
    <property type="entry name" value="tRNA_U5-meth_tr"/>
    <property type="match status" value="1"/>
</dbReference>
<dbReference type="SUPFAM" id="SSF53335">
    <property type="entry name" value="S-adenosyl-L-methionine-dependent methyltransferases"/>
    <property type="match status" value="1"/>
</dbReference>
<dbReference type="PROSITE" id="PS51687">
    <property type="entry name" value="SAM_MT_RNA_M5U"/>
    <property type="match status" value="1"/>
</dbReference>
<dbReference type="PROSITE" id="PS01230">
    <property type="entry name" value="TRMA_1"/>
    <property type="match status" value="1"/>
</dbReference>
<dbReference type="PROSITE" id="PS01231">
    <property type="entry name" value="TRMA_2"/>
    <property type="match status" value="1"/>
</dbReference>
<sequence length="367" mass="42130">MTPEILPIEDYDDQLAEKTERLRGMMAPFNAPEPAVFRSPVSHYRMRAEFRIWHDGDELYHIMFDQQTKQRIRVDRFPAASELINRLMPEMLAAIQPDPVLRRKLFQIDYLSTLSGEVIVSLLYHRALNEEWQEHARALRDSLTAQGFNLQLIGRATKTKICLDRDYVDECLPVAGRNMIYRQVENSFTQPNAAVNIQMLEWALDATAGSKGDLLELYCGNGNFSLALARNFERVLATEIAKPSVAAAQYNIAANQIENVQIIRMAAEEFTQAMQGVRQFNRLQGIDLTSYQCETIFVDPPRSGLDDETVKLVQAYPRILYISCNPETLSNNLKTLSETHDIRRLALFDQFPYTHHMECGVLLEKRQ</sequence>
<keyword id="KW-0489">Methyltransferase</keyword>
<keyword id="KW-1185">Reference proteome</keyword>
<keyword id="KW-0949">S-adenosyl-L-methionine</keyword>
<keyword id="KW-0808">Transferase</keyword>
<keyword id="KW-0819">tRNA processing</keyword>